<proteinExistence type="inferred from homology"/>
<name>CITG_ESCF3</name>
<protein>
    <recommendedName>
        <fullName evidence="1">2-(5''-triphosphoribosyl)-3'-dephosphocoenzyme-A synthase</fullName>
        <shortName evidence="1">2-(5''-triphosphoribosyl)-3'-dephospho-CoA synthase</shortName>
        <ecNumber evidence="1">2.4.2.52</ecNumber>
    </recommendedName>
</protein>
<organism>
    <name type="scientific">Escherichia fergusonii (strain ATCC 35469 / DSM 13698 / CCUG 18766 / IAM 14443 / JCM 21226 / LMG 7866 / NBRC 102419 / NCTC 12128 / CDC 0568-73)</name>
    <dbReference type="NCBI Taxonomy" id="585054"/>
    <lineage>
        <taxon>Bacteria</taxon>
        <taxon>Pseudomonadati</taxon>
        <taxon>Pseudomonadota</taxon>
        <taxon>Gammaproteobacteria</taxon>
        <taxon>Enterobacterales</taxon>
        <taxon>Enterobacteriaceae</taxon>
        <taxon>Escherichia</taxon>
    </lineage>
</organism>
<comment type="function">
    <text evidence="1">Catalyzes the formation of 2-(5''-triphosphoribosyl)-3'-dephosphocoenzyme-A, the precursor of the prosthetic group of the holo-acyl carrier protein (gamma chain) of citrate lyase, from ATP and dephospho-CoA.</text>
</comment>
<comment type="catalytic activity">
    <reaction evidence="1">
        <text>3'-dephospho-CoA + ATP = 2'-(5''-triphospho-alpha-D-ribosyl)-3'-dephospho-CoA + adenine</text>
        <dbReference type="Rhea" id="RHEA:15117"/>
        <dbReference type="ChEBI" id="CHEBI:16708"/>
        <dbReference type="ChEBI" id="CHEBI:30616"/>
        <dbReference type="ChEBI" id="CHEBI:57328"/>
        <dbReference type="ChEBI" id="CHEBI:61378"/>
        <dbReference type="EC" id="2.4.2.52"/>
    </reaction>
</comment>
<comment type="similarity">
    <text evidence="1">Belongs to the CitG/MdcB family.</text>
</comment>
<dbReference type="EC" id="2.4.2.52" evidence="1"/>
<dbReference type="EMBL" id="CU928158">
    <property type="protein sequence ID" value="CAQ87623.1"/>
    <property type="molecule type" value="Genomic_DNA"/>
</dbReference>
<dbReference type="RefSeq" id="WP_001286124.1">
    <property type="nucleotide sequence ID" value="NC_011740.1"/>
</dbReference>
<dbReference type="GeneID" id="75058875"/>
<dbReference type="KEGG" id="efe:EFER_0037"/>
<dbReference type="HOGENOM" id="CLU_056179_1_0_6"/>
<dbReference type="OrthoDB" id="114886at2"/>
<dbReference type="Proteomes" id="UP000000745">
    <property type="component" value="Chromosome"/>
</dbReference>
<dbReference type="GO" id="GO:0005524">
    <property type="term" value="F:ATP binding"/>
    <property type="evidence" value="ECO:0007669"/>
    <property type="project" value="UniProtKB-KW"/>
</dbReference>
<dbReference type="GO" id="GO:0046917">
    <property type="term" value="F:triphosphoribosyl-dephospho-CoA synthase activity"/>
    <property type="evidence" value="ECO:0007669"/>
    <property type="project" value="UniProtKB-UniRule"/>
</dbReference>
<dbReference type="GO" id="GO:0051191">
    <property type="term" value="P:prosthetic group biosynthetic process"/>
    <property type="evidence" value="ECO:0007669"/>
    <property type="project" value="TreeGrafter"/>
</dbReference>
<dbReference type="FunFam" id="1.10.4200.10:FF:000001">
    <property type="entry name" value="Triphosphoribosyl-dephospho-CoA synthase CitG"/>
    <property type="match status" value="1"/>
</dbReference>
<dbReference type="Gene3D" id="1.10.4200.10">
    <property type="entry name" value="Triphosphoribosyl-dephospho-CoA protein"/>
    <property type="match status" value="1"/>
</dbReference>
<dbReference type="HAMAP" id="MF_00397">
    <property type="entry name" value="CitG"/>
    <property type="match status" value="1"/>
</dbReference>
<dbReference type="InterPro" id="IPR002736">
    <property type="entry name" value="CitG"/>
</dbReference>
<dbReference type="InterPro" id="IPR017551">
    <property type="entry name" value="TriPribosyl-deP-CoA_syn_CitG"/>
</dbReference>
<dbReference type="NCBIfam" id="TIGR03125">
    <property type="entry name" value="citrate_citG"/>
    <property type="match status" value="1"/>
</dbReference>
<dbReference type="PANTHER" id="PTHR30201:SF2">
    <property type="entry name" value="2-(5''-TRIPHOSPHORIBOSYL)-3'-DEPHOSPHOCOENZYME-A SYNTHASE"/>
    <property type="match status" value="1"/>
</dbReference>
<dbReference type="PANTHER" id="PTHR30201">
    <property type="entry name" value="TRIPHOSPHORIBOSYL-DEPHOSPHO-COA SYNTHASE"/>
    <property type="match status" value="1"/>
</dbReference>
<dbReference type="Pfam" id="PF01874">
    <property type="entry name" value="CitG"/>
    <property type="match status" value="1"/>
</dbReference>
<accession>B7LWM0</accession>
<evidence type="ECO:0000255" key="1">
    <source>
        <dbReference type="HAMAP-Rule" id="MF_00397"/>
    </source>
</evidence>
<keyword id="KW-0067">ATP-binding</keyword>
<keyword id="KW-0547">Nucleotide-binding</keyword>
<keyword id="KW-0808">Transferase</keyword>
<feature type="chain" id="PRO_1000123225" description="2-(5''-triphosphoribosyl)-3'-dephosphocoenzyme-A synthase">
    <location>
        <begin position="1"/>
        <end position="303"/>
    </location>
</feature>
<gene>
    <name evidence="1" type="primary">citG</name>
    <name type="ordered locus">EFER_0037</name>
</gene>
<sequence length="303" mass="33180">MSDVITTDQPASATSLLQAKGIANLVERALLTEVRLTPKPGLVDIRNSGAHKDMDLALFEKSTLAVAPWMENFYQLGYDTSALEAELVLPMLRPIGMACEADMLQATGGVNTHRGAVFSFGLISAVTGRMVALEEELEQNRICYWVARMCRDLVAKELSSEATNAATSKSVEHFLHYGLSGARGEAESGFQTVRTVALPIFERIRAQNEDMNLALLQTLLHLMAWNNDTNLVSRGALKGLYYVQQQAQKMLWEGGVLMRGGLEALQAFDDELIARNLSPGGSADLLAVTWFLSHFPKGETFAD</sequence>
<reference key="1">
    <citation type="journal article" date="2009" name="PLoS Genet.">
        <title>Organised genome dynamics in the Escherichia coli species results in highly diverse adaptive paths.</title>
        <authorList>
            <person name="Touchon M."/>
            <person name="Hoede C."/>
            <person name="Tenaillon O."/>
            <person name="Barbe V."/>
            <person name="Baeriswyl S."/>
            <person name="Bidet P."/>
            <person name="Bingen E."/>
            <person name="Bonacorsi S."/>
            <person name="Bouchier C."/>
            <person name="Bouvet O."/>
            <person name="Calteau A."/>
            <person name="Chiapello H."/>
            <person name="Clermont O."/>
            <person name="Cruveiller S."/>
            <person name="Danchin A."/>
            <person name="Diard M."/>
            <person name="Dossat C."/>
            <person name="Karoui M.E."/>
            <person name="Frapy E."/>
            <person name="Garry L."/>
            <person name="Ghigo J.M."/>
            <person name="Gilles A.M."/>
            <person name="Johnson J."/>
            <person name="Le Bouguenec C."/>
            <person name="Lescat M."/>
            <person name="Mangenot S."/>
            <person name="Martinez-Jehanne V."/>
            <person name="Matic I."/>
            <person name="Nassif X."/>
            <person name="Oztas S."/>
            <person name="Petit M.A."/>
            <person name="Pichon C."/>
            <person name="Rouy Z."/>
            <person name="Ruf C.S."/>
            <person name="Schneider D."/>
            <person name="Tourret J."/>
            <person name="Vacherie B."/>
            <person name="Vallenet D."/>
            <person name="Medigue C."/>
            <person name="Rocha E.P.C."/>
            <person name="Denamur E."/>
        </authorList>
    </citation>
    <scope>NUCLEOTIDE SEQUENCE [LARGE SCALE GENOMIC DNA]</scope>
    <source>
        <strain>ATCC 35469 / DSM 13698 / BCRC 15582 / CCUG 18766 / IAM 14443 / JCM 21226 / LMG 7866 / NBRC 102419 / NCTC 12128 / CDC 0568-73</strain>
    </source>
</reference>